<feature type="chain" id="PRO_0000048302" description="Tubulin beta chain">
    <location>
        <begin position="1"/>
        <end position="451"/>
    </location>
</feature>
<feature type="region of interest" description="Disordered" evidence="3">
    <location>
        <begin position="426"/>
        <end position="451"/>
    </location>
</feature>
<feature type="compositionally biased region" description="Acidic residues" evidence="3">
    <location>
        <begin position="429"/>
        <end position="451"/>
    </location>
</feature>
<feature type="binding site" evidence="2">
    <location>
        <position position="11"/>
    </location>
    <ligand>
        <name>GTP</name>
        <dbReference type="ChEBI" id="CHEBI:37565"/>
    </ligand>
</feature>
<feature type="binding site" evidence="1">
    <location>
        <position position="69"/>
    </location>
    <ligand>
        <name>GTP</name>
        <dbReference type="ChEBI" id="CHEBI:37565"/>
    </ligand>
</feature>
<feature type="binding site" evidence="1">
    <location>
        <position position="69"/>
    </location>
    <ligand>
        <name>Mg(2+)</name>
        <dbReference type="ChEBI" id="CHEBI:18420"/>
    </ligand>
</feature>
<feature type="binding site" evidence="2">
    <location>
        <position position="138"/>
    </location>
    <ligand>
        <name>GTP</name>
        <dbReference type="ChEBI" id="CHEBI:37565"/>
    </ligand>
</feature>
<feature type="binding site" evidence="2">
    <location>
        <position position="142"/>
    </location>
    <ligand>
        <name>GTP</name>
        <dbReference type="ChEBI" id="CHEBI:37565"/>
    </ligand>
</feature>
<feature type="binding site" evidence="2">
    <location>
        <position position="143"/>
    </location>
    <ligand>
        <name>GTP</name>
        <dbReference type="ChEBI" id="CHEBI:37565"/>
    </ligand>
</feature>
<feature type="binding site" evidence="2">
    <location>
        <position position="144"/>
    </location>
    <ligand>
        <name>GTP</name>
        <dbReference type="ChEBI" id="CHEBI:37565"/>
    </ligand>
</feature>
<feature type="binding site" evidence="2">
    <location>
        <position position="204"/>
    </location>
    <ligand>
        <name>GTP</name>
        <dbReference type="ChEBI" id="CHEBI:37565"/>
    </ligand>
</feature>
<feature type="binding site" evidence="2">
    <location>
        <position position="226"/>
    </location>
    <ligand>
        <name>GTP</name>
        <dbReference type="ChEBI" id="CHEBI:37565"/>
    </ligand>
</feature>
<feature type="sequence conflict" description="In Ref. 2; CAA56940." evidence="4" ref="2">
    <original>N</original>
    <variation>H</variation>
    <location>
        <position position="184"/>
    </location>
</feature>
<feature type="sequence conflict" description="In Ref. 2; CAA56940." evidence="4" ref="2">
    <original>R</original>
    <variation>S</variation>
    <location>
        <position position="380"/>
    </location>
</feature>
<feature type="sequence conflict" description="In Ref. 2; CAA56940." evidence="4" ref="2">
    <original>AEG</original>
    <variation>EGA</variation>
    <location>
        <begin position="442"/>
        <end position="444"/>
    </location>
</feature>
<comment type="function">
    <text>Tubulin is the major constituent of microtubules, a cylinder consisting of laterally associated linear protofilaments composed of alpha- and beta-tubulin heterodimers. Microtubules grow by the addition of GTP-tubulin dimers to the microtubule end, where a stabilizing cap forms. Below the cap, tubulin dimers are in GDP-bound state, owing to GTPase activity of alpha-tubulin.</text>
</comment>
<comment type="cofactor">
    <cofactor evidence="1">
        <name>Mg(2+)</name>
        <dbReference type="ChEBI" id="CHEBI:18420"/>
    </cofactor>
</comment>
<comment type="subunit">
    <text>Dimer of alpha and beta chains. A typical microtubule is a hollow water-filled tube with an outer diameter of 25 nm and an inner diameter of 15 nM. Alpha-beta heterodimers associate head-to-tail to form protofilaments running lengthwise along the microtubule wall with the beta-tubulin subunit facing the microtubule plus end conferring a structural polarity. Microtubules usually have 13 protofilaments but different protofilament numbers can be found in some organisms and specialized cells.</text>
</comment>
<comment type="subcellular location">
    <subcellularLocation>
        <location>Cytoplasm</location>
        <location>Cytoskeleton</location>
    </subcellularLocation>
</comment>
<comment type="similarity">
    <text evidence="4">Belongs to the tubulin family.</text>
</comment>
<evidence type="ECO:0000250" key="1">
    <source>
        <dbReference type="UniProtKB" id="P68363"/>
    </source>
</evidence>
<evidence type="ECO:0000250" key="2">
    <source>
        <dbReference type="UniProtKB" id="Q13509"/>
    </source>
</evidence>
<evidence type="ECO:0000256" key="3">
    <source>
        <dbReference type="SAM" id="MobiDB-lite"/>
    </source>
</evidence>
<evidence type="ECO:0000305" key="4"/>
<protein>
    <recommendedName>
        <fullName>Tubulin beta chain</fullName>
    </recommendedName>
    <alternativeName>
        <fullName>Beta-tubulin</fullName>
    </alternativeName>
</protein>
<proteinExistence type="evidence at transcript level"/>
<keyword id="KW-0963">Cytoplasm</keyword>
<keyword id="KW-0206">Cytoskeleton</keyword>
<keyword id="KW-0342">GTP-binding</keyword>
<keyword id="KW-0460">Magnesium</keyword>
<keyword id="KW-0479">Metal-binding</keyword>
<keyword id="KW-0493">Microtubule</keyword>
<keyword id="KW-0547">Nucleotide-binding</keyword>
<name>TBB_NAEPR</name>
<reference key="1">
    <citation type="journal article" date="1994" name="J. Mol. Biol.">
        <title>A beta-tubulin gene of Naegleria encodes a carboxy-terminal tyrosine. Aromatic amino acids are conserved at carboxy termini.</title>
        <authorList>
            <person name="Lai E.Y."/>
            <person name="Remillard S.P."/>
            <person name="Fulton C."/>
        </authorList>
    </citation>
    <scope>NUCLEOTIDE SEQUENCE [GENOMIC DNA]</scope>
    <source>
        <strain>NEG</strain>
    </source>
</reference>
<reference key="2">
    <citation type="journal article" date="1995" name="Misainmurhag Hoiji">
        <title>Cloning and sequence determination of alpha-tubulin, beta-tubulin and flagellar calmodulin.</title>
        <authorList>
            <person name="Choi Y.-J."/>
            <person name="Park H.-L."/>
            <person name="Lee J.-H."/>
        </authorList>
    </citation>
    <scope>NUCLEOTIDE SEQUENCE [MRNA]</scope>
    <source>
        <strain>ATCC 30961 / NB-1</strain>
    </source>
</reference>
<accession>P34108</accession>
<accession>Q25564</accession>
<organism>
    <name type="scientific">Naegleria pringsheimi</name>
    <name type="common">Amoeba</name>
    <dbReference type="NCBI Taxonomy" id="234921"/>
    <lineage>
        <taxon>Eukaryota</taxon>
        <taxon>Discoba</taxon>
        <taxon>Heterolobosea</taxon>
        <taxon>Tetramitia</taxon>
        <taxon>Eutetramitia</taxon>
        <taxon>Vahlkampfiidae</taxon>
        <taxon>Naegleria</taxon>
    </lineage>
</organism>
<dbReference type="EMBL" id="Z13961">
    <property type="protein sequence ID" value="CAA78362.1"/>
    <property type="molecule type" value="Genomic_DNA"/>
</dbReference>
<dbReference type="EMBL" id="X81050">
    <property type="protein sequence ID" value="CAA56940.1"/>
    <property type="molecule type" value="mRNA"/>
</dbReference>
<dbReference type="PIR" id="S30514">
    <property type="entry name" value="S30514"/>
</dbReference>
<dbReference type="SMR" id="P34108"/>
<dbReference type="KEGG" id="ngr:NAEGRDRAFT_55423"/>
<dbReference type="KEGG" id="ngr:NAEGRDRAFT_56391"/>
<dbReference type="KEGG" id="ngr:NAEGRDRAFT_83350"/>
<dbReference type="GO" id="GO:0005737">
    <property type="term" value="C:cytoplasm"/>
    <property type="evidence" value="ECO:0007669"/>
    <property type="project" value="UniProtKB-KW"/>
</dbReference>
<dbReference type="GO" id="GO:0005874">
    <property type="term" value="C:microtubule"/>
    <property type="evidence" value="ECO:0007669"/>
    <property type="project" value="UniProtKB-KW"/>
</dbReference>
<dbReference type="GO" id="GO:0005525">
    <property type="term" value="F:GTP binding"/>
    <property type="evidence" value="ECO:0007669"/>
    <property type="project" value="UniProtKB-KW"/>
</dbReference>
<dbReference type="GO" id="GO:0003924">
    <property type="term" value="F:GTPase activity"/>
    <property type="evidence" value="ECO:0007669"/>
    <property type="project" value="InterPro"/>
</dbReference>
<dbReference type="GO" id="GO:0046872">
    <property type="term" value="F:metal ion binding"/>
    <property type="evidence" value="ECO:0007669"/>
    <property type="project" value="UniProtKB-KW"/>
</dbReference>
<dbReference type="GO" id="GO:0005200">
    <property type="term" value="F:structural constituent of cytoskeleton"/>
    <property type="evidence" value="ECO:0007669"/>
    <property type="project" value="InterPro"/>
</dbReference>
<dbReference type="GO" id="GO:0007017">
    <property type="term" value="P:microtubule-based process"/>
    <property type="evidence" value="ECO:0007669"/>
    <property type="project" value="InterPro"/>
</dbReference>
<dbReference type="CDD" id="cd02187">
    <property type="entry name" value="beta_tubulin"/>
    <property type="match status" value="1"/>
</dbReference>
<dbReference type="FunFam" id="1.10.287.600:FF:000002">
    <property type="entry name" value="Tubulin beta chain"/>
    <property type="match status" value="1"/>
</dbReference>
<dbReference type="FunFam" id="3.30.1330.20:FF:000002">
    <property type="entry name" value="Tubulin beta chain"/>
    <property type="match status" value="1"/>
</dbReference>
<dbReference type="FunFam" id="3.40.50.1440:FF:000005">
    <property type="entry name" value="Tubulin beta chain"/>
    <property type="match status" value="1"/>
</dbReference>
<dbReference type="Gene3D" id="1.10.287.600">
    <property type="entry name" value="Helix hairpin bin"/>
    <property type="match status" value="1"/>
</dbReference>
<dbReference type="Gene3D" id="3.30.1330.20">
    <property type="entry name" value="Tubulin/FtsZ, C-terminal domain"/>
    <property type="match status" value="1"/>
</dbReference>
<dbReference type="Gene3D" id="3.40.50.1440">
    <property type="entry name" value="Tubulin/FtsZ, GTPase domain"/>
    <property type="match status" value="1"/>
</dbReference>
<dbReference type="InterPro" id="IPR013838">
    <property type="entry name" value="Beta-tubulin_BS"/>
</dbReference>
<dbReference type="InterPro" id="IPR002453">
    <property type="entry name" value="Beta_tubulin"/>
</dbReference>
<dbReference type="InterPro" id="IPR008280">
    <property type="entry name" value="Tub_FtsZ_C"/>
</dbReference>
<dbReference type="InterPro" id="IPR000217">
    <property type="entry name" value="Tubulin"/>
</dbReference>
<dbReference type="InterPro" id="IPR037103">
    <property type="entry name" value="Tubulin/FtsZ-like_C"/>
</dbReference>
<dbReference type="InterPro" id="IPR018316">
    <property type="entry name" value="Tubulin/FtsZ_2-layer-sand-dom"/>
</dbReference>
<dbReference type="InterPro" id="IPR036525">
    <property type="entry name" value="Tubulin/FtsZ_GTPase_sf"/>
</dbReference>
<dbReference type="InterPro" id="IPR023123">
    <property type="entry name" value="Tubulin_C"/>
</dbReference>
<dbReference type="InterPro" id="IPR017975">
    <property type="entry name" value="Tubulin_CS"/>
</dbReference>
<dbReference type="InterPro" id="IPR003008">
    <property type="entry name" value="Tubulin_FtsZ_GTPase"/>
</dbReference>
<dbReference type="PANTHER" id="PTHR11588">
    <property type="entry name" value="TUBULIN"/>
    <property type="match status" value="1"/>
</dbReference>
<dbReference type="Pfam" id="PF00091">
    <property type="entry name" value="Tubulin"/>
    <property type="match status" value="1"/>
</dbReference>
<dbReference type="Pfam" id="PF03953">
    <property type="entry name" value="Tubulin_C"/>
    <property type="match status" value="1"/>
</dbReference>
<dbReference type="PRINTS" id="PR01163">
    <property type="entry name" value="BETATUBULIN"/>
</dbReference>
<dbReference type="PRINTS" id="PR01161">
    <property type="entry name" value="TUBULIN"/>
</dbReference>
<dbReference type="SMART" id="SM00864">
    <property type="entry name" value="Tubulin"/>
    <property type="match status" value="1"/>
</dbReference>
<dbReference type="SMART" id="SM00865">
    <property type="entry name" value="Tubulin_C"/>
    <property type="match status" value="1"/>
</dbReference>
<dbReference type="SUPFAM" id="SSF55307">
    <property type="entry name" value="Tubulin C-terminal domain-like"/>
    <property type="match status" value="1"/>
</dbReference>
<dbReference type="SUPFAM" id="SSF52490">
    <property type="entry name" value="Tubulin nucleotide-binding domain-like"/>
    <property type="match status" value="1"/>
</dbReference>
<dbReference type="PROSITE" id="PS00227">
    <property type="entry name" value="TUBULIN"/>
    <property type="match status" value="1"/>
</dbReference>
<dbReference type="PROSITE" id="PS00228">
    <property type="entry name" value="TUBULIN_B_AUTOREG"/>
    <property type="match status" value="1"/>
</dbReference>
<sequence length="451" mass="50511">MREIVHIQAGQCGNQIGAKFWEVISDEHGVDPTGAYHGDSDLQLERINVYYNEATGGRYVPRAILMDLEPGTMDSVRAGPYGQIFRPDNFVFGQTGAGNNWAKGHYTEGAELIDSVLDVVRKEAESCDCLQGFQIAHSLGGGTGSGMGTLLISKIREEYPDRMMMTFSVFPSPKVSDTVVEPYNATLSVHQLVENADEVMCIDNEALYDICFRTLKLTTPTFGDLNHLVSIVMSGVTCCLRFPGQLNSDLRKLAVNLIPFPRLHFFLIGFAPLTSRGSQQYRALTVPELTQQMFDAKNMMAASDPRHGRYLTASAMFRGRMSTKEVDEQMLNVQNKNSSYFVEWIPNNIKSSVCDIPPRGLKMAATFIGNSTAIQEMFKRVSEQFTAMFRRKAFLHWYTGEGMDEMEFTEAESNMNDLVSEYQQYQDATAEEEGEFDENEGAEGEEQPADY</sequence>